<reference key="1">
    <citation type="submission" date="1995-01" db="EMBL/GenBank/DDBJ databases">
        <title>Cloning and sequencing of the RIB3 gene from Saccharomyces cerevisiae.</title>
        <authorList>
            <person name="Garcia-Ramirez J.J."/>
            <person name="Santos M.A."/>
            <person name="Revuelta J.L."/>
        </authorList>
    </citation>
    <scope>NUCLEOTIDE SEQUENCE [GENOMIC DNA]</scope>
</reference>
<reference key="2">
    <citation type="journal article" date="1997" name="Nature">
        <title>The nucleotide sequence of Saccharomyces cerevisiae chromosome IV.</title>
        <authorList>
            <person name="Jacq C."/>
            <person name="Alt-Moerbe J."/>
            <person name="Andre B."/>
            <person name="Arnold W."/>
            <person name="Bahr A."/>
            <person name="Ballesta J.P.G."/>
            <person name="Bargues M."/>
            <person name="Baron L."/>
            <person name="Becker A."/>
            <person name="Biteau N."/>
            <person name="Bloecker H."/>
            <person name="Blugeon C."/>
            <person name="Boskovic J."/>
            <person name="Brandt P."/>
            <person name="Brueckner M."/>
            <person name="Buitrago M.J."/>
            <person name="Coster F."/>
            <person name="Delaveau T."/>
            <person name="del Rey F."/>
            <person name="Dujon B."/>
            <person name="Eide L.G."/>
            <person name="Garcia-Cantalejo J.M."/>
            <person name="Goffeau A."/>
            <person name="Gomez-Peris A."/>
            <person name="Granotier C."/>
            <person name="Hanemann V."/>
            <person name="Hankeln T."/>
            <person name="Hoheisel J.D."/>
            <person name="Jaeger W."/>
            <person name="Jimenez A."/>
            <person name="Jonniaux J.-L."/>
            <person name="Kraemer C."/>
            <person name="Kuester H."/>
            <person name="Laamanen P."/>
            <person name="Legros Y."/>
            <person name="Louis E.J."/>
            <person name="Moeller-Rieker S."/>
            <person name="Monnet A."/>
            <person name="Moro M."/>
            <person name="Mueller-Auer S."/>
            <person name="Nussbaumer B."/>
            <person name="Paricio N."/>
            <person name="Paulin L."/>
            <person name="Perea J."/>
            <person name="Perez-Alonso M."/>
            <person name="Perez-Ortin J.E."/>
            <person name="Pohl T.M."/>
            <person name="Prydz H."/>
            <person name="Purnelle B."/>
            <person name="Rasmussen S.W."/>
            <person name="Remacha M.A."/>
            <person name="Revuelta J.L."/>
            <person name="Rieger M."/>
            <person name="Salom D."/>
            <person name="Saluz H.P."/>
            <person name="Saiz J.E."/>
            <person name="Saren A.-M."/>
            <person name="Schaefer M."/>
            <person name="Scharfe M."/>
            <person name="Schmidt E.R."/>
            <person name="Schneider C."/>
            <person name="Scholler P."/>
            <person name="Schwarz S."/>
            <person name="Soler-Mira A."/>
            <person name="Urrestarazu L.A."/>
            <person name="Verhasselt P."/>
            <person name="Vissers S."/>
            <person name="Voet M."/>
            <person name="Volckaert G."/>
            <person name="Wagner G."/>
            <person name="Wambutt R."/>
            <person name="Wedler E."/>
            <person name="Wedler H."/>
            <person name="Woelfl S."/>
            <person name="Harris D.E."/>
            <person name="Bowman S."/>
            <person name="Brown D."/>
            <person name="Churcher C.M."/>
            <person name="Connor R."/>
            <person name="Dedman K."/>
            <person name="Gentles S."/>
            <person name="Hamlin N."/>
            <person name="Hunt S."/>
            <person name="Jones L."/>
            <person name="McDonald S."/>
            <person name="Murphy L.D."/>
            <person name="Niblett D."/>
            <person name="Odell C."/>
            <person name="Oliver K."/>
            <person name="Rajandream M.A."/>
            <person name="Richards C."/>
            <person name="Shore L."/>
            <person name="Walsh S.V."/>
            <person name="Barrell B.G."/>
            <person name="Dietrich F.S."/>
            <person name="Mulligan J.T."/>
            <person name="Allen E."/>
            <person name="Araujo R."/>
            <person name="Aviles E."/>
            <person name="Berno A."/>
            <person name="Carpenter J."/>
            <person name="Chen E."/>
            <person name="Cherry J.M."/>
            <person name="Chung E."/>
            <person name="Duncan M."/>
            <person name="Hunicke-Smith S."/>
            <person name="Hyman R.W."/>
            <person name="Komp C."/>
            <person name="Lashkari D."/>
            <person name="Lew H."/>
            <person name="Lin D."/>
            <person name="Mosedale D."/>
            <person name="Nakahara K."/>
            <person name="Namath A."/>
            <person name="Oefner P."/>
            <person name="Oh C."/>
            <person name="Petel F.X."/>
            <person name="Roberts D."/>
            <person name="Schramm S."/>
            <person name="Schroeder M."/>
            <person name="Shogren T."/>
            <person name="Shroff N."/>
            <person name="Winant A."/>
            <person name="Yelton M.A."/>
            <person name="Botstein D."/>
            <person name="Davis R.W."/>
            <person name="Johnston M."/>
            <person name="Andrews S."/>
            <person name="Brinkman R."/>
            <person name="Cooper J."/>
            <person name="Ding H."/>
            <person name="Du Z."/>
            <person name="Favello A."/>
            <person name="Fulton L."/>
            <person name="Gattung S."/>
            <person name="Greco T."/>
            <person name="Hallsworth K."/>
            <person name="Hawkins J."/>
            <person name="Hillier L.W."/>
            <person name="Jier M."/>
            <person name="Johnson D."/>
            <person name="Johnston L."/>
            <person name="Kirsten J."/>
            <person name="Kucaba T."/>
            <person name="Langston Y."/>
            <person name="Latreille P."/>
            <person name="Le T."/>
            <person name="Mardis E."/>
            <person name="Menezes S."/>
            <person name="Miller N."/>
            <person name="Nhan M."/>
            <person name="Pauley A."/>
            <person name="Peluso D."/>
            <person name="Rifkin L."/>
            <person name="Riles L."/>
            <person name="Taich A."/>
            <person name="Trevaskis E."/>
            <person name="Vignati D."/>
            <person name="Wilcox L."/>
            <person name="Wohldman P."/>
            <person name="Vaudin M."/>
            <person name="Wilson R."/>
            <person name="Waterston R."/>
            <person name="Albermann K."/>
            <person name="Hani J."/>
            <person name="Heumann K."/>
            <person name="Kleine K."/>
            <person name="Mewes H.-W."/>
            <person name="Zollner A."/>
            <person name="Zaccaria P."/>
        </authorList>
    </citation>
    <scope>NUCLEOTIDE SEQUENCE [LARGE SCALE GENOMIC DNA]</scope>
    <source>
        <strain>ATCC 204508 / S288c</strain>
    </source>
</reference>
<reference key="3">
    <citation type="journal article" date="2014" name="G3 (Bethesda)">
        <title>The reference genome sequence of Saccharomyces cerevisiae: Then and now.</title>
        <authorList>
            <person name="Engel S.R."/>
            <person name="Dietrich F.S."/>
            <person name="Fisk D.G."/>
            <person name="Binkley G."/>
            <person name="Balakrishnan R."/>
            <person name="Costanzo M.C."/>
            <person name="Dwight S.S."/>
            <person name="Hitz B.C."/>
            <person name="Karra K."/>
            <person name="Nash R.S."/>
            <person name="Weng S."/>
            <person name="Wong E.D."/>
            <person name="Lloyd P."/>
            <person name="Skrzypek M.S."/>
            <person name="Miyasato S.R."/>
            <person name="Simison M."/>
            <person name="Cherry J.M."/>
        </authorList>
    </citation>
    <scope>GENOME REANNOTATION</scope>
    <source>
        <strain>ATCC 204508 / S288c</strain>
    </source>
</reference>
<reference key="4">
    <citation type="journal article" date="2007" name="Genome Res.">
        <title>Approaching a complete repository of sequence-verified protein-encoding clones for Saccharomyces cerevisiae.</title>
        <authorList>
            <person name="Hu Y."/>
            <person name="Rolfs A."/>
            <person name="Bhullar B."/>
            <person name="Murthy T.V.S."/>
            <person name="Zhu C."/>
            <person name="Berger M.F."/>
            <person name="Camargo A.A."/>
            <person name="Kelley F."/>
            <person name="McCarron S."/>
            <person name="Jepson D."/>
            <person name="Richardson A."/>
            <person name="Raphael J."/>
            <person name="Moreira D."/>
            <person name="Taycher E."/>
            <person name="Zuo D."/>
            <person name="Mohr S."/>
            <person name="Kane M.F."/>
            <person name="Williamson J."/>
            <person name="Simpson A.J.G."/>
            <person name="Bulyk M.L."/>
            <person name="Harlow E."/>
            <person name="Marsischky G."/>
            <person name="Kolodner R.D."/>
            <person name="LaBaer J."/>
        </authorList>
    </citation>
    <scope>NUCLEOTIDE SEQUENCE [GENOMIC DNA]</scope>
    <source>
        <strain>ATCC 204508 / S288c</strain>
    </source>
</reference>
<reference key="5">
    <citation type="journal article" date="1995" name="J. Biol. Chem.">
        <title>The Saccharomyces cerevisiae RIB4 gene codes for 6,7-dimethyl-8-ribityllumazine synthase involved in riboflavin biosynthesis. Molecular characterization of the gene and purification of the encoded protein.</title>
        <authorList>
            <person name="Garcia-Ramirez J.J."/>
            <person name="Santos M.A."/>
            <person name="Revuelta J.L."/>
        </authorList>
    </citation>
    <scope>FUNCTION</scope>
    <scope>CATALYTIC ACTIVITY</scope>
</reference>
<reference key="6">
    <citation type="journal article" date="2003" name="J. Biol. Chem.">
        <title>Yeast dihydroxybutanone phosphate synthase, an enzyme of the riboflavin biosynthetic pathway, has a second unrelated function in expression of mitochondrial respiration.</title>
        <authorList>
            <person name="Jin C."/>
            <person name="Barrientos A."/>
            <person name="Tzagoloff A."/>
        </authorList>
    </citation>
    <scope>SUBCELLULAR LOCATION</scope>
</reference>
<reference key="7">
    <citation type="journal article" date="2003" name="Nature">
        <title>Global analysis of protein localization in budding yeast.</title>
        <authorList>
            <person name="Huh W.-K."/>
            <person name="Falvo J.V."/>
            <person name="Gerke L.C."/>
            <person name="Carroll A.S."/>
            <person name="Howson R.W."/>
            <person name="Weissman J.S."/>
            <person name="O'Shea E.K."/>
        </authorList>
    </citation>
    <scope>SUBCELLULAR LOCATION [LARGE SCALE ANALYSIS]</scope>
</reference>
<reference key="8">
    <citation type="journal article" date="2003" name="Nature">
        <title>Global analysis of protein expression in yeast.</title>
        <authorList>
            <person name="Ghaemmaghami S."/>
            <person name="Huh W.-K."/>
            <person name="Bower K."/>
            <person name="Howson R.W."/>
            <person name="Belle A."/>
            <person name="Dephoure N."/>
            <person name="O'Shea E.K."/>
            <person name="Weissman J.S."/>
        </authorList>
    </citation>
    <scope>LEVEL OF PROTEIN EXPRESSION [LARGE SCALE ANALYSIS]</scope>
</reference>
<reference key="9">
    <citation type="journal article" date="2009" name="Science">
        <title>Global analysis of Cdk1 substrate phosphorylation sites provides insights into evolution.</title>
        <authorList>
            <person name="Holt L.J."/>
            <person name="Tuch B.B."/>
            <person name="Villen J."/>
            <person name="Johnson A.D."/>
            <person name="Gygi S.P."/>
            <person name="Morgan D.O."/>
        </authorList>
    </citation>
    <scope>PHOSPHORYLATION [LARGE SCALE ANALYSIS] AT THR-3</scope>
    <scope>IDENTIFICATION BY MASS SPECTROMETRY [LARGE SCALE ANALYSIS]</scope>
</reference>
<reference key="10">
    <citation type="journal article" date="2011" name="J. Proteomics">
        <title>Thiol redox proteomics identifies differential targets of cytosolic and mitochondrial glutaredoxin-2 isoforms in Saccharomyces cerevisiae. Reversible S-glutathionylation of DHBP synthase (RIB3).</title>
        <authorList>
            <person name="McDonagh B."/>
            <person name="Requejo R."/>
            <person name="Fuentes-Almagro C.A."/>
            <person name="Ogueta S."/>
            <person name="Barcena J.A."/>
            <person name="Padilla C.A."/>
        </authorList>
    </citation>
    <scope>GLUTATHIONYLATION AT CYS-56</scope>
</reference>
<comment type="function">
    <text evidence="4 9">Catalyzes the conversion of D-ribulose 5-phosphate to formate and 3,4-dihydroxy-2-butanone 4-phosphate (Probable). Also has an unrelated function in expression of mitochondrial respiration (PubMed:12595523).</text>
</comment>
<comment type="catalytic activity">
    <reaction evidence="9">
        <text>D-ribulose 5-phosphate = (2S)-2-hydroxy-3-oxobutyl phosphate + formate + H(+)</text>
        <dbReference type="Rhea" id="RHEA:18457"/>
        <dbReference type="ChEBI" id="CHEBI:15378"/>
        <dbReference type="ChEBI" id="CHEBI:15740"/>
        <dbReference type="ChEBI" id="CHEBI:58121"/>
        <dbReference type="ChEBI" id="CHEBI:58830"/>
        <dbReference type="EC" id="4.1.99.12"/>
    </reaction>
</comment>
<comment type="cofactor">
    <cofactor evidence="1">
        <name>Mg(2+)</name>
        <dbReference type="ChEBI" id="CHEBI:18420"/>
    </cofactor>
    <cofactor evidence="1">
        <name>Mn(2+)</name>
        <dbReference type="ChEBI" id="CHEBI:29035"/>
    </cofactor>
    <text evidence="1">Binds 2 divalent metal cations per subunit. Magnesium or manganese.</text>
</comment>
<comment type="pathway">
    <text>Cofactor biosynthesis; riboflavin biosynthesis; 2-hydroxy-3-oxobutyl phosphate from D-ribulose 5-phosphate: step 1/1.</text>
</comment>
<comment type="subunit">
    <text evidence="1">Homodimer.</text>
</comment>
<comment type="subcellular location">
    <subcellularLocation>
        <location evidence="4 5">Cytoplasm</location>
    </subcellularLocation>
    <subcellularLocation>
        <location evidence="5">Nucleus</location>
    </subcellularLocation>
    <subcellularLocation>
        <location evidence="4">Mitochondrion intermembrane space</location>
    </subcellularLocation>
</comment>
<comment type="PTM">
    <text evidence="7">S-glutathionylation of Cys-56 is reversible and dependent on the cytoplasmic isoform of glutaredoxin-2.</text>
</comment>
<comment type="miscellaneous">
    <text evidence="6">Present with 5460 molecules/cell in log phase SD medium.</text>
</comment>
<comment type="similarity">
    <text evidence="8">Belongs to the DHBP synthase family.</text>
</comment>
<evidence type="ECO:0000250" key="1"/>
<evidence type="ECO:0000250" key="2">
    <source>
        <dbReference type="UniProtKB" id="Q5A3V6"/>
    </source>
</evidence>
<evidence type="ECO:0000250" key="3">
    <source>
        <dbReference type="UniProtKB" id="Q8TG90"/>
    </source>
</evidence>
<evidence type="ECO:0000269" key="4">
    <source>
    </source>
</evidence>
<evidence type="ECO:0000269" key="5">
    <source>
    </source>
</evidence>
<evidence type="ECO:0000269" key="6">
    <source>
    </source>
</evidence>
<evidence type="ECO:0000269" key="7">
    <source>
    </source>
</evidence>
<evidence type="ECO:0000305" key="8"/>
<evidence type="ECO:0000305" key="9">
    <source>
    </source>
</evidence>
<evidence type="ECO:0007744" key="10">
    <source>
    </source>
</evidence>
<protein>
    <recommendedName>
        <fullName>3,4-dihydroxy-2-butanone 4-phosphate synthase</fullName>
        <shortName>DHBP synthase</shortName>
        <ecNumber evidence="9">4.1.99.12</ecNumber>
    </recommendedName>
</protein>
<accession>Q99258</accession>
<accession>D6VTB0</accession>
<gene>
    <name type="primary">RIB3</name>
    <name type="ordered locus">YDR487C</name>
    <name type="ORF">D8035.30</name>
</gene>
<sequence>MFTPIDQAIEHFKQNKFVIVMDDAGRENEGDLICAAENVSTEQMAFLVRHSSGYVCAPMTNAIADKLDLPLLRTGMKFESNDDDRHGTAYTITVDVAQGTTTGISAHDRSMTCRALADSSSTPKSFLKPGHICPLRAADGGVLQRRGHTEAGVDLCKLSGLSPVAVIGELVNDDEQGTMMRLNDCQAFGKKHGIPLISIEELAQYLKK</sequence>
<dbReference type="EC" id="4.1.99.12" evidence="9"/>
<dbReference type="EMBL" id="Z21619">
    <property type="protein sequence ID" value="CAA79743.1"/>
    <property type="molecule type" value="Genomic_DNA"/>
</dbReference>
<dbReference type="EMBL" id="U33050">
    <property type="protein sequence ID" value="AAB64927.1"/>
    <property type="molecule type" value="Genomic_DNA"/>
</dbReference>
<dbReference type="EMBL" id="AY557810">
    <property type="protein sequence ID" value="AAS56136.1"/>
    <property type="molecule type" value="Genomic_DNA"/>
</dbReference>
<dbReference type="EMBL" id="BK006938">
    <property type="protein sequence ID" value="DAA12320.1"/>
    <property type="molecule type" value="Genomic_DNA"/>
</dbReference>
<dbReference type="PIR" id="S50973">
    <property type="entry name" value="S50973"/>
</dbReference>
<dbReference type="RefSeq" id="NP_010775.1">
    <property type="nucleotide sequence ID" value="NM_001180795.1"/>
</dbReference>
<dbReference type="SMR" id="Q99258"/>
<dbReference type="BioGRID" id="32539">
    <property type="interactions" value="20"/>
</dbReference>
<dbReference type="DIP" id="DIP-4316N"/>
<dbReference type="FunCoup" id="Q99258">
    <property type="interactions" value="186"/>
</dbReference>
<dbReference type="IntAct" id="Q99258">
    <property type="interactions" value="1"/>
</dbReference>
<dbReference type="MINT" id="Q99258"/>
<dbReference type="STRING" id="4932.YDR487C"/>
<dbReference type="iPTMnet" id="Q99258"/>
<dbReference type="PaxDb" id="4932-YDR487C"/>
<dbReference type="PeptideAtlas" id="Q99258"/>
<dbReference type="EnsemblFungi" id="YDR487C_mRNA">
    <property type="protein sequence ID" value="YDR487C"/>
    <property type="gene ID" value="YDR487C"/>
</dbReference>
<dbReference type="GeneID" id="852098"/>
<dbReference type="KEGG" id="sce:YDR487C"/>
<dbReference type="AGR" id="SGD:S000002895"/>
<dbReference type="SGD" id="S000002895">
    <property type="gene designation" value="RIB3"/>
</dbReference>
<dbReference type="VEuPathDB" id="FungiDB:YDR487C"/>
<dbReference type="eggNOG" id="KOG1284">
    <property type="taxonomic scope" value="Eukaryota"/>
</dbReference>
<dbReference type="GeneTree" id="ENSGT00940000176677"/>
<dbReference type="HOGENOM" id="CLU_020273_3_0_1"/>
<dbReference type="InParanoid" id="Q99258"/>
<dbReference type="OMA" id="DAGGLIC"/>
<dbReference type="OrthoDB" id="60371at2759"/>
<dbReference type="BioCyc" id="YEAST:MONOMER3O-89"/>
<dbReference type="UniPathway" id="UPA00275">
    <property type="reaction ID" value="UER00399"/>
</dbReference>
<dbReference type="BioGRID-ORCS" id="852098">
    <property type="hits" value="8 hits in 10 CRISPR screens"/>
</dbReference>
<dbReference type="PRO" id="PR:Q99258"/>
<dbReference type="Proteomes" id="UP000002311">
    <property type="component" value="Chromosome IV"/>
</dbReference>
<dbReference type="RNAct" id="Q99258">
    <property type="molecule type" value="protein"/>
</dbReference>
<dbReference type="GO" id="GO:0005829">
    <property type="term" value="C:cytosol"/>
    <property type="evidence" value="ECO:0000314"/>
    <property type="project" value="SGD"/>
</dbReference>
<dbReference type="GO" id="GO:0005758">
    <property type="term" value="C:mitochondrial intermembrane space"/>
    <property type="evidence" value="ECO:0000314"/>
    <property type="project" value="SGD"/>
</dbReference>
<dbReference type="GO" id="GO:0005634">
    <property type="term" value="C:nucleus"/>
    <property type="evidence" value="ECO:0007669"/>
    <property type="project" value="UniProtKB-SubCell"/>
</dbReference>
<dbReference type="GO" id="GO:0008686">
    <property type="term" value="F:3,4-dihydroxy-2-butanone-4-phosphate synthase activity"/>
    <property type="evidence" value="ECO:0000315"/>
    <property type="project" value="SGD"/>
</dbReference>
<dbReference type="GO" id="GO:0046872">
    <property type="term" value="F:metal ion binding"/>
    <property type="evidence" value="ECO:0007669"/>
    <property type="project" value="UniProtKB-KW"/>
</dbReference>
<dbReference type="GO" id="GO:0009060">
    <property type="term" value="P:aerobic respiration"/>
    <property type="evidence" value="ECO:0000315"/>
    <property type="project" value="SGD"/>
</dbReference>
<dbReference type="GO" id="GO:0009231">
    <property type="term" value="P:riboflavin biosynthetic process"/>
    <property type="evidence" value="ECO:0000315"/>
    <property type="project" value="SGD"/>
</dbReference>
<dbReference type="FunFam" id="3.90.870.10:FF:000002">
    <property type="entry name" value="3,4-dihydroxy-2-butanone 4-phosphate synthase"/>
    <property type="match status" value="1"/>
</dbReference>
<dbReference type="Gene3D" id="3.90.870.10">
    <property type="entry name" value="DHBP synthase"/>
    <property type="match status" value="1"/>
</dbReference>
<dbReference type="InterPro" id="IPR017945">
    <property type="entry name" value="DHBP_synth_RibB-like_a/b_dom"/>
</dbReference>
<dbReference type="InterPro" id="IPR000422">
    <property type="entry name" value="DHBP_synthase_RibB"/>
</dbReference>
<dbReference type="NCBIfam" id="TIGR00506">
    <property type="entry name" value="ribB"/>
    <property type="match status" value="1"/>
</dbReference>
<dbReference type="PANTHER" id="PTHR21327:SF18">
    <property type="entry name" value="3,4-DIHYDROXY-2-BUTANONE 4-PHOSPHATE SYNTHASE"/>
    <property type="match status" value="1"/>
</dbReference>
<dbReference type="PANTHER" id="PTHR21327">
    <property type="entry name" value="GTP CYCLOHYDROLASE II-RELATED"/>
    <property type="match status" value="1"/>
</dbReference>
<dbReference type="Pfam" id="PF00926">
    <property type="entry name" value="DHBP_synthase"/>
    <property type="match status" value="1"/>
</dbReference>
<dbReference type="SUPFAM" id="SSF55821">
    <property type="entry name" value="YrdC/RibB"/>
    <property type="match status" value="1"/>
</dbReference>
<proteinExistence type="evidence at protein level"/>
<feature type="chain" id="PRO_0000151829" description="3,4-dihydroxy-2-butanone 4-phosphate synthase">
    <location>
        <begin position="1"/>
        <end position="208"/>
    </location>
</feature>
<feature type="binding site" evidence="3">
    <location>
        <position position="27"/>
    </location>
    <ligand>
        <name>Mg(2+)</name>
        <dbReference type="ChEBI" id="CHEBI:18420"/>
        <label>1</label>
    </ligand>
</feature>
<feature type="binding site" evidence="3">
    <location>
        <position position="27"/>
    </location>
    <ligand>
        <name>Mg(2+)</name>
        <dbReference type="ChEBI" id="CHEBI:18420"/>
        <label>2</label>
    </ligand>
</feature>
<feature type="binding site" evidence="2">
    <location>
        <position position="31"/>
    </location>
    <ligand>
        <name>D-ribulose 5-phosphate</name>
        <dbReference type="ChEBI" id="CHEBI:58121"/>
    </ligand>
</feature>
<feature type="binding site" evidence="2">
    <location>
        <position position="88"/>
    </location>
    <ligand>
        <name>D-ribulose 5-phosphate</name>
        <dbReference type="ChEBI" id="CHEBI:58121"/>
    </ligand>
</feature>
<feature type="binding site" evidence="2">
    <location>
        <begin position="145"/>
        <end position="149"/>
    </location>
    <ligand>
        <name>D-ribulose 5-phosphate</name>
        <dbReference type="ChEBI" id="CHEBI:58121"/>
    </ligand>
</feature>
<feature type="binding site" evidence="3">
    <location>
        <position position="148"/>
    </location>
    <ligand>
        <name>Mg(2+)</name>
        <dbReference type="ChEBI" id="CHEBI:18420"/>
        <label>2</label>
    </ligand>
</feature>
<feature type="site" description="Essential for catalytic activity" evidence="1">
    <location>
        <position position="131"/>
    </location>
</feature>
<feature type="site" description="Essential for catalytic activity" evidence="1">
    <location>
        <position position="169"/>
    </location>
</feature>
<feature type="modified residue" description="Phosphothreonine" evidence="10">
    <location>
        <position position="3"/>
    </location>
</feature>
<feature type="modified residue" description="S-glutathionyl cysteine; by GRX2" evidence="7">
    <location>
        <position position="56"/>
    </location>
</feature>
<organism>
    <name type="scientific">Saccharomyces cerevisiae (strain ATCC 204508 / S288c)</name>
    <name type="common">Baker's yeast</name>
    <dbReference type="NCBI Taxonomy" id="559292"/>
    <lineage>
        <taxon>Eukaryota</taxon>
        <taxon>Fungi</taxon>
        <taxon>Dikarya</taxon>
        <taxon>Ascomycota</taxon>
        <taxon>Saccharomycotina</taxon>
        <taxon>Saccharomycetes</taxon>
        <taxon>Saccharomycetales</taxon>
        <taxon>Saccharomycetaceae</taxon>
        <taxon>Saccharomyces</taxon>
    </lineage>
</organism>
<keyword id="KW-0963">Cytoplasm</keyword>
<keyword id="KW-0318">Glutathionylation</keyword>
<keyword id="KW-0456">Lyase</keyword>
<keyword id="KW-0460">Magnesium</keyword>
<keyword id="KW-0464">Manganese</keyword>
<keyword id="KW-0479">Metal-binding</keyword>
<keyword id="KW-0496">Mitochondrion</keyword>
<keyword id="KW-0539">Nucleus</keyword>
<keyword id="KW-0597">Phosphoprotein</keyword>
<keyword id="KW-1185">Reference proteome</keyword>
<keyword id="KW-0686">Riboflavin biosynthesis</keyword>
<name>RIB3_YEAST</name>